<evidence type="ECO:0000255" key="1">
    <source>
        <dbReference type="HAMAP-Rule" id="MF_00107"/>
    </source>
</evidence>
<evidence type="ECO:0000269" key="2">
    <source>
    </source>
</evidence>
<evidence type="ECO:0000305" key="3">
    <source>
    </source>
</evidence>
<evidence type="ECO:0007829" key="4">
    <source>
        <dbReference type="PDB" id="4C8E"/>
    </source>
</evidence>
<evidence type="ECO:0007829" key="5">
    <source>
        <dbReference type="PDB" id="4C8G"/>
    </source>
</evidence>
<evidence type="ECO:0007829" key="6">
    <source>
        <dbReference type="PDB" id="4C8I"/>
    </source>
</evidence>
<keyword id="KW-0002">3D-structure</keyword>
<keyword id="KW-0414">Isoprene biosynthesis</keyword>
<keyword id="KW-0456">Lyase</keyword>
<keyword id="KW-0479">Metal-binding</keyword>
<comment type="function">
    <text evidence="1">Involved in the biosynthesis of isopentenyl diphosphate (IPP) and dimethylallyl diphosphate (DMAPP), two major building blocks of isoprenoid compounds. Catalyzes the conversion of 4-diphosphocytidyl-2-C-methyl-D-erythritol 2-phosphate (CDP-ME2P) to 2-C-methyl-D-erythritol 2,4-cyclodiphosphate (ME-CPP) with a corresponding release of cytidine 5-monophosphate (CMP).</text>
</comment>
<comment type="catalytic activity">
    <reaction evidence="1">
        <text>4-CDP-2-C-methyl-D-erythritol 2-phosphate = 2-C-methyl-D-erythritol 2,4-cyclic diphosphate + CMP</text>
        <dbReference type="Rhea" id="RHEA:23864"/>
        <dbReference type="ChEBI" id="CHEBI:57919"/>
        <dbReference type="ChEBI" id="CHEBI:58483"/>
        <dbReference type="ChEBI" id="CHEBI:60377"/>
        <dbReference type="EC" id="4.6.1.12"/>
    </reaction>
</comment>
<comment type="cofactor">
    <cofactor evidence="1 2">
        <name>a divalent metal cation</name>
        <dbReference type="ChEBI" id="CHEBI:60240"/>
    </cofactor>
    <text evidence="1 2">Binds 1 divalent metal cation per subunit.</text>
</comment>
<comment type="pathway">
    <text evidence="1">Isoprenoid biosynthesis; isopentenyl diphosphate biosynthesis via DXP pathway; isopentenyl diphosphate from 1-deoxy-D-xylulose 5-phosphate: step 4/6.</text>
</comment>
<comment type="subunit">
    <text evidence="1 3">Homotrimer.</text>
</comment>
<comment type="similarity">
    <text evidence="1">Belongs to the IspF family.</text>
</comment>
<organism>
    <name type="scientific">Burkholderia cenocepacia (strain ATCC BAA-245 / DSM 16553 / LMG 16656 / NCTC 13227 / J2315 / CF5610)</name>
    <name type="common">Burkholderia cepacia (strain J2315)</name>
    <dbReference type="NCBI Taxonomy" id="216591"/>
    <lineage>
        <taxon>Bacteria</taxon>
        <taxon>Pseudomonadati</taxon>
        <taxon>Pseudomonadota</taxon>
        <taxon>Betaproteobacteria</taxon>
        <taxon>Burkholderiales</taxon>
        <taxon>Burkholderiaceae</taxon>
        <taxon>Burkholderia</taxon>
        <taxon>Burkholderia cepacia complex</taxon>
    </lineage>
</organism>
<dbReference type="EC" id="4.6.1.12" evidence="1"/>
<dbReference type="EMBL" id="AM747720">
    <property type="protein sequence ID" value="CAR52315.1"/>
    <property type="molecule type" value="Genomic_DNA"/>
</dbReference>
<dbReference type="RefSeq" id="WP_006488015.1">
    <property type="nucleotide sequence ID" value="NC_011000.1"/>
</dbReference>
<dbReference type="PDB" id="4C8E">
    <property type="method" value="X-ray"/>
    <property type="resolution" value="1.90 A"/>
    <property type="chains" value="A/B/C=1-161"/>
</dbReference>
<dbReference type="PDB" id="4C8G">
    <property type="method" value="X-ray"/>
    <property type="resolution" value="2.00 A"/>
    <property type="chains" value="A/B/C=1-161"/>
</dbReference>
<dbReference type="PDB" id="4C8I">
    <property type="method" value="X-ray"/>
    <property type="resolution" value="2.00 A"/>
    <property type="chains" value="A/B/C=1-161"/>
</dbReference>
<dbReference type="PDBsum" id="4C8E"/>
<dbReference type="PDBsum" id="4C8G"/>
<dbReference type="PDBsum" id="4C8I"/>
<dbReference type="SMR" id="B4EC22"/>
<dbReference type="GeneID" id="83048743"/>
<dbReference type="KEGG" id="bcj:BCAL2015"/>
<dbReference type="eggNOG" id="COG0245">
    <property type="taxonomic scope" value="Bacteria"/>
</dbReference>
<dbReference type="HOGENOM" id="CLU_084630_2_0_4"/>
<dbReference type="BioCyc" id="BCEN216591:G1G1V-2213-MONOMER"/>
<dbReference type="UniPathway" id="UPA00056">
    <property type="reaction ID" value="UER00095"/>
</dbReference>
<dbReference type="EvolutionaryTrace" id="B4EC22"/>
<dbReference type="Proteomes" id="UP000001035">
    <property type="component" value="Chromosome 1"/>
</dbReference>
<dbReference type="GO" id="GO:0008685">
    <property type="term" value="F:2-C-methyl-D-erythritol 2,4-cyclodiphosphate synthase activity"/>
    <property type="evidence" value="ECO:0007669"/>
    <property type="project" value="UniProtKB-UniRule"/>
</dbReference>
<dbReference type="GO" id="GO:0046872">
    <property type="term" value="F:metal ion binding"/>
    <property type="evidence" value="ECO:0007669"/>
    <property type="project" value="UniProtKB-KW"/>
</dbReference>
<dbReference type="GO" id="GO:0019288">
    <property type="term" value="P:isopentenyl diphosphate biosynthetic process, methylerythritol 4-phosphate pathway"/>
    <property type="evidence" value="ECO:0007669"/>
    <property type="project" value="UniProtKB-UniRule"/>
</dbReference>
<dbReference type="GO" id="GO:0016114">
    <property type="term" value="P:terpenoid biosynthetic process"/>
    <property type="evidence" value="ECO:0007669"/>
    <property type="project" value="InterPro"/>
</dbReference>
<dbReference type="CDD" id="cd00554">
    <property type="entry name" value="MECDP_synthase"/>
    <property type="match status" value="1"/>
</dbReference>
<dbReference type="FunFam" id="3.30.1330.50:FF:000001">
    <property type="entry name" value="2-C-methyl-D-erythritol 2,4-cyclodiphosphate synthase"/>
    <property type="match status" value="1"/>
</dbReference>
<dbReference type="Gene3D" id="3.30.1330.50">
    <property type="entry name" value="2-C-methyl-D-erythritol 2,4-cyclodiphosphate synthase"/>
    <property type="match status" value="1"/>
</dbReference>
<dbReference type="HAMAP" id="MF_00107">
    <property type="entry name" value="IspF"/>
    <property type="match status" value="1"/>
</dbReference>
<dbReference type="InterPro" id="IPR003526">
    <property type="entry name" value="MECDP_synthase"/>
</dbReference>
<dbReference type="InterPro" id="IPR020555">
    <property type="entry name" value="MECDP_synthase_CS"/>
</dbReference>
<dbReference type="InterPro" id="IPR036571">
    <property type="entry name" value="MECDP_synthase_sf"/>
</dbReference>
<dbReference type="NCBIfam" id="TIGR00151">
    <property type="entry name" value="ispF"/>
    <property type="match status" value="1"/>
</dbReference>
<dbReference type="PANTHER" id="PTHR43181">
    <property type="entry name" value="2-C-METHYL-D-ERYTHRITOL 2,4-CYCLODIPHOSPHATE SYNTHASE, CHLOROPLASTIC"/>
    <property type="match status" value="1"/>
</dbReference>
<dbReference type="PANTHER" id="PTHR43181:SF1">
    <property type="entry name" value="2-C-METHYL-D-ERYTHRITOL 2,4-CYCLODIPHOSPHATE SYNTHASE, CHLOROPLASTIC"/>
    <property type="match status" value="1"/>
</dbReference>
<dbReference type="Pfam" id="PF02542">
    <property type="entry name" value="YgbB"/>
    <property type="match status" value="1"/>
</dbReference>
<dbReference type="SUPFAM" id="SSF69765">
    <property type="entry name" value="IpsF-like"/>
    <property type="match status" value="1"/>
</dbReference>
<dbReference type="PROSITE" id="PS01350">
    <property type="entry name" value="ISPF"/>
    <property type="match status" value="1"/>
</dbReference>
<reference key="1">
    <citation type="journal article" date="2009" name="J. Bacteriol.">
        <title>The genome of Burkholderia cenocepacia J2315, an epidemic pathogen of cystic fibrosis patients.</title>
        <authorList>
            <person name="Holden M.T."/>
            <person name="Seth-Smith H.M."/>
            <person name="Crossman L.C."/>
            <person name="Sebaihia M."/>
            <person name="Bentley S.D."/>
            <person name="Cerdeno-Tarraga A.M."/>
            <person name="Thomson N.R."/>
            <person name="Bason N."/>
            <person name="Quail M.A."/>
            <person name="Sharp S."/>
            <person name="Cherevach I."/>
            <person name="Churcher C."/>
            <person name="Goodhead I."/>
            <person name="Hauser H."/>
            <person name="Holroyd N."/>
            <person name="Mungall K."/>
            <person name="Scott P."/>
            <person name="Walker D."/>
            <person name="White B."/>
            <person name="Rose H."/>
            <person name="Iversen P."/>
            <person name="Mil-Homens D."/>
            <person name="Rocha E.P."/>
            <person name="Fialho A.M."/>
            <person name="Baldwin A."/>
            <person name="Dowson C."/>
            <person name="Barrell B.G."/>
            <person name="Govan J.R."/>
            <person name="Vandamme P."/>
            <person name="Hart C.A."/>
            <person name="Mahenthiralingam E."/>
            <person name="Parkhill J."/>
        </authorList>
    </citation>
    <scope>NUCLEOTIDE SEQUENCE [LARGE SCALE GENOMIC DNA]</scope>
    <source>
        <strain>ATCC BAA-245 / DSM 16553 / LMG 16656 / NCTC 13227 / J2315 / CF5610</strain>
    </source>
</reference>
<reference key="2">
    <citation type="journal article" date="2014" name="BMC Struct. Biol.">
        <title>Crystal structures of IspF from Plasmodium falciparum and Burkholderia cenocepacia: comparisons inform antimicrobial drug target assessment.</title>
        <authorList>
            <person name="O'Rourke P.E."/>
            <person name="Kalinowska-Tluscik J."/>
            <person name="Fyfe P.K."/>
            <person name="Dawson A."/>
            <person name="Hunter W.N."/>
        </authorList>
    </citation>
    <scope>X-RAY CRYSTALLOGRAPHY (1.9 ANGSTROMS) IN COMPLEX WITH ZINC IONS AND CMP</scope>
    <scope>SUBUNIT</scope>
    <scope>COFACTOR</scope>
</reference>
<proteinExistence type="evidence at protein level"/>
<feature type="chain" id="PRO_1000094243" description="2-C-methyl-D-erythritol 2,4-cyclodiphosphate synthase">
    <location>
        <begin position="1"/>
        <end position="161"/>
    </location>
</feature>
<feature type="binding site" evidence="1">
    <location>
        <begin position="10"/>
        <end position="12"/>
    </location>
    <ligand>
        <name>4-CDP-2-C-methyl-D-erythritol 2-phosphate</name>
        <dbReference type="ChEBI" id="CHEBI:57919"/>
    </ligand>
</feature>
<feature type="binding site" evidence="1">
    <location>
        <position position="10"/>
    </location>
    <ligand>
        <name>a divalent metal cation</name>
        <dbReference type="ChEBI" id="CHEBI:60240"/>
    </ligand>
</feature>
<feature type="binding site" evidence="1">
    <location>
        <position position="12"/>
    </location>
    <ligand>
        <name>a divalent metal cation</name>
        <dbReference type="ChEBI" id="CHEBI:60240"/>
    </ligand>
</feature>
<feature type="binding site" evidence="1">
    <location>
        <begin position="36"/>
        <end position="37"/>
    </location>
    <ligand>
        <name>4-CDP-2-C-methyl-D-erythritol 2-phosphate</name>
        <dbReference type="ChEBI" id="CHEBI:57919"/>
    </ligand>
</feature>
<feature type="binding site">
    <location>
        <begin position="40"/>
        <end position="48"/>
    </location>
    <ligand>
        <name>4-CDP-2-C-methyl-D-erythritol 2-phosphate</name>
        <dbReference type="ChEBI" id="CHEBI:57919"/>
    </ligand>
</feature>
<feature type="binding site" evidence="1">
    <location>
        <position position="44"/>
    </location>
    <ligand>
        <name>a divalent metal cation</name>
        <dbReference type="ChEBI" id="CHEBI:60240"/>
    </ligand>
</feature>
<feature type="binding site" evidence="1">
    <location>
        <begin position="58"/>
        <end position="60"/>
    </location>
    <ligand>
        <name>4-CDP-2-C-methyl-D-erythritol 2-phosphate</name>
        <dbReference type="ChEBI" id="CHEBI:57919"/>
    </ligand>
</feature>
<feature type="binding site" evidence="1">
    <location>
        <begin position="63"/>
        <end position="67"/>
    </location>
    <ligand>
        <name>4-CDP-2-C-methyl-D-erythritol 2-phosphate</name>
        <dbReference type="ChEBI" id="CHEBI:57919"/>
    </ligand>
</feature>
<feature type="binding site">
    <location>
        <begin position="102"/>
        <end position="108"/>
    </location>
    <ligand>
        <name>4-CDP-2-C-methyl-D-erythritol 2-phosphate</name>
        <dbReference type="ChEBI" id="CHEBI:57919"/>
    </ligand>
</feature>
<feature type="binding site">
    <location>
        <begin position="133"/>
        <end position="137"/>
    </location>
    <ligand>
        <name>4-CDP-2-C-methyl-D-erythritol 2-phosphate</name>
        <dbReference type="ChEBI" id="CHEBI:57919"/>
    </ligand>
</feature>
<feature type="binding site" evidence="1">
    <location>
        <position position="144"/>
    </location>
    <ligand>
        <name>4-CDP-2-C-methyl-D-erythritol 2-phosphate</name>
        <dbReference type="ChEBI" id="CHEBI:57919"/>
    </ligand>
</feature>
<feature type="site" description="Transition state stabilizer" evidence="1">
    <location>
        <position position="36"/>
    </location>
</feature>
<feature type="site" description="Transition state stabilizer" evidence="1">
    <location>
        <position position="135"/>
    </location>
</feature>
<feature type="strand" evidence="4">
    <location>
        <begin position="2"/>
        <end position="15"/>
    </location>
</feature>
<feature type="strand" evidence="4">
    <location>
        <begin position="20"/>
        <end position="22"/>
    </location>
</feature>
<feature type="strand" evidence="4">
    <location>
        <begin position="25"/>
        <end position="27"/>
    </location>
</feature>
<feature type="strand" evidence="5">
    <location>
        <begin position="30"/>
        <end position="33"/>
    </location>
</feature>
<feature type="strand" evidence="5">
    <location>
        <begin position="35"/>
        <end position="37"/>
    </location>
</feature>
<feature type="helix" evidence="4">
    <location>
        <begin position="41"/>
        <end position="53"/>
    </location>
</feature>
<feature type="helix" evidence="4">
    <location>
        <begin position="59"/>
        <end position="62"/>
    </location>
</feature>
<feature type="strand" evidence="6">
    <location>
        <begin position="65"/>
        <end position="67"/>
    </location>
</feature>
<feature type="helix" evidence="4">
    <location>
        <begin position="68"/>
        <end position="70"/>
    </location>
</feature>
<feature type="helix" evidence="4">
    <location>
        <begin position="75"/>
        <end position="88"/>
    </location>
</feature>
<feature type="strand" evidence="4">
    <location>
        <begin position="91"/>
        <end position="101"/>
    </location>
</feature>
<feature type="strand" evidence="4">
    <location>
        <begin position="103"/>
        <end position="105"/>
    </location>
</feature>
<feature type="helix" evidence="4">
    <location>
        <begin position="108"/>
        <end position="110"/>
    </location>
</feature>
<feature type="helix" evidence="4">
    <location>
        <begin position="111"/>
        <end position="122"/>
    </location>
</feature>
<feature type="helix" evidence="4">
    <location>
        <begin position="126"/>
        <end position="128"/>
    </location>
</feature>
<feature type="strand" evidence="4">
    <location>
        <begin position="132"/>
        <end position="134"/>
    </location>
</feature>
<feature type="helix" evidence="4">
    <location>
        <begin position="140"/>
        <end position="143"/>
    </location>
</feature>
<feature type="strand" evidence="4">
    <location>
        <begin position="146"/>
        <end position="158"/>
    </location>
</feature>
<accession>B4EC22</accession>
<name>ISPF_BURCJ</name>
<sequence length="161" mass="16923">MDFRIGQGYDVHQLVEGRPLIIGGVTIPYERGLLGHSDADVLLHAITDALFGAAALGDIGRHFSDTDAAFKGADSRVLLRACAERVKAAGFTIQNVDSTVIAQAPKLAPHIDGMRANIAADLGLPLERVNVKAKTNEKLGYLGRGEGIEAQAAALLVKQGG</sequence>
<protein>
    <recommendedName>
        <fullName evidence="1">2-C-methyl-D-erythritol 2,4-cyclodiphosphate synthase</fullName>
        <shortName evidence="1">MECDP-synthase</shortName>
        <shortName evidence="1">MECPP-synthase</shortName>
        <shortName evidence="1">MECPS</shortName>
        <ecNumber evidence="1">4.6.1.12</ecNumber>
    </recommendedName>
</protein>
<gene>
    <name evidence="1" type="primary">ispF</name>
    <name type="ordered locus">BceJ2315_19780</name>
    <name type="ORF">BCAL2015</name>
</gene>